<protein>
    <recommendedName>
        <fullName evidence="1">Esterase FrsA</fullName>
        <ecNumber evidence="1">3.1.1.1</ecNumber>
    </recommendedName>
</protein>
<accession>P37722</accession>
<feature type="chain" id="PRO_0000197157" description="Esterase FrsA">
    <location>
        <begin position="1"/>
        <end position="414"/>
    </location>
</feature>
<feature type="sequence conflict" description="In Ref. 2; X63336." evidence="2" ref="2">
    <original>NRG</original>
    <variation>IV</variation>
    <location>
        <begin position="28"/>
        <end position="30"/>
    </location>
</feature>
<feature type="sequence conflict" description="In Ref. 2; X63336." evidence="2" ref="2">
    <original>MQ</original>
    <variation>CI</variation>
    <location>
        <begin position="35"/>
        <end position="36"/>
    </location>
</feature>
<keyword id="KW-0378">Hydrolase</keyword>
<keyword id="KW-1185">Reference proteome</keyword>
<keyword id="KW-0719">Serine esterase</keyword>
<proteinExistence type="inferred from homology"/>
<dbReference type="EC" id="3.1.1.1" evidence="1"/>
<dbReference type="EMBL" id="AE006468">
    <property type="protein sequence ID" value="AAL19274.1"/>
    <property type="molecule type" value="Genomic_DNA"/>
</dbReference>
<dbReference type="EMBL" id="X63336">
    <property type="status" value="NOT_ANNOTATED_CDS"/>
    <property type="molecule type" value="Genomic_DNA"/>
</dbReference>
<dbReference type="RefSeq" id="WP_000189588.1">
    <property type="nucleotide sequence ID" value="NC_003197.2"/>
</dbReference>
<dbReference type="SMR" id="P37722"/>
<dbReference type="STRING" id="99287.STM0318"/>
<dbReference type="ESTHER" id="salty-yafa">
    <property type="family name" value="Duf_1100-R"/>
</dbReference>
<dbReference type="PaxDb" id="99287-STM0318"/>
<dbReference type="KEGG" id="stm:STM0318"/>
<dbReference type="PATRIC" id="fig|99287.12.peg.338"/>
<dbReference type="HOGENOM" id="CLU_036819_0_0_6"/>
<dbReference type="OMA" id="NIPWVDH"/>
<dbReference type="PhylomeDB" id="P37722"/>
<dbReference type="BioCyc" id="SENT99287:STM0318-MONOMER"/>
<dbReference type="Proteomes" id="UP000001014">
    <property type="component" value="Chromosome"/>
</dbReference>
<dbReference type="GO" id="GO:0106435">
    <property type="term" value="F:carboxylesterase activity"/>
    <property type="evidence" value="ECO:0007669"/>
    <property type="project" value="UniProtKB-EC"/>
</dbReference>
<dbReference type="GO" id="GO:0016787">
    <property type="term" value="F:hydrolase activity"/>
    <property type="evidence" value="ECO:0000318"/>
    <property type="project" value="GO_Central"/>
</dbReference>
<dbReference type="FunFam" id="3.40.50.1820:FF:000022">
    <property type="entry name" value="Esterase FrsA"/>
    <property type="match status" value="1"/>
</dbReference>
<dbReference type="Gene3D" id="3.40.50.1820">
    <property type="entry name" value="alpha/beta hydrolase"/>
    <property type="match status" value="1"/>
</dbReference>
<dbReference type="HAMAP" id="MF_01063">
    <property type="entry name" value="FrsA"/>
    <property type="match status" value="1"/>
</dbReference>
<dbReference type="InterPro" id="IPR029058">
    <property type="entry name" value="AB_hydrolase_fold"/>
</dbReference>
<dbReference type="InterPro" id="IPR043423">
    <property type="entry name" value="FrsA"/>
</dbReference>
<dbReference type="InterPro" id="IPR010520">
    <property type="entry name" value="FrsA-like"/>
</dbReference>
<dbReference type="InterPro" id="IPR050261">
    <property type="entry name" value="FrsA_esterase"/>
</dbReference>
<dbReference type="NCBIfam" id="NF003460">
    <property type="entry name" value="PRK05077.1"/>
    <property type="match status" value="1"/>
</dbReference>
<dbReference type="PANTHER" id="PTHR22946">
    <property type="entry name" value="DIENELACTONE HYDROLASE DOMAIN-CONTAINING PROTEIN-RELATED"/>
    <property type="match status" value="1"/>
</dbReference>
<dbReference type="PANTHER" id="PTHR22946:SF4">
    <property type="entry name" value="ESTERASE FRSA"/>
    <property type="match status" value="1"/>
</dbReference>
<dbReference type="Pfam" id="PF06500">
    <property type="entry name" value="FrsA-like"/>
    <property type="match status" value="1"/>
</dbReference>
<dbReference type="SUPFAM" id="SSF53474">
    <property type="entry name" value="alpha/beta-Hydrolases"/>
    <property type="match status" value="1"/>
</dbReference>
<gene>
    <name evidence="1" type="primary">frsA</name>
    <name type="ordered locus">STM0318</name>
</gene>
<name>FRSA_SALTY</name>
<sequence>MTQANLSETLFKPRFKHTETSTLVRRFNRGSQPPMQSALDGKNVPHWYRMINRLMWIWRGVDPREILDVQARIVMSDAERTDDDLYDTVIGYRGGNWIYEWAKQAMDWQQKACQEQDAMRSGRYWLHASTLYNIAAYPHLKGDELAEQAQALANRAYEEAAQRLPGSLREMEFAVPGGSPVTAFLHMPKGDGPFPTVLMCGGLDAMQTDYYTLYERYFAPRGIAMLTLDMPSVGFSSKWKLTQDSSLLHQHVLKALPNVPWVDHTRVAAFGFRFGANVAVRLAYLEAPRLKAVACLGPVVHALLSDPQRQSTVPEMYLDVLASRLGMHDASDEALRVELNRYSLKVQGLLGRRCPTPMLSGFWKNDPFSPEEESRLITTSSSDGKLIEIPFNPVYRNFDRALQEITDWINHRLC</sequence>
<evidence type="ECO:0000255" key="1">
    <source>
        <dbReference type="HAMAP-Rule" id="MF_01063"/>
    </source>
</evidence>
<evidence type="ECO:0000305" key="2"/>
<reference key="1">
    <citation type="journal article" date="2001" name="Nature">
        <title>Complete genome sequence of Salmonella enterica serovar Typhimurium LT2.</title>
        <authorList>
            <person name="McClelland M."/>
            <person name="Sanderson K.E."/>
            <person name="Spieth J."/>
            <person name="Clifton S.W."/>
            <person name="Latreille P."/>
            <person name="Courtney L."/>
            <person name="Porwollik S."/>
            <person name="Ali J."/>
            <person name="Dante M."/>
            <person name="Du F."/>
            <person name="Hou S."/>
            <person name="Layman D."/>
            <person name="Leonard S."/>
            <person name="Nguyen C."/>
            <person name="Scott K."/>
            <person name="Holmes A."/>
            <person name="Grewal N."/>
            <person name="Mulvaney E."/>
            <person name="Ryan E."/>
            <person name="Sun H."/>
            <person name="Florea L."/>
            <person name="Miller W."/>
            <person name="Stoneking T."/>
            <person name="Nhan M."/>
            <person name="Waterston R."/>
            <person name="Wilson R.K."/>
        </authorList>
    </citation>
    <scope>NUCLEOTIDE SEQUENCE [LARGE SCALE GENOMIC DNA]</scope>
    <source>
        <strain>LT2 / SGSC1412 / ATCC 700720</strain>
    </source>
</reference>
<reference key="2">
    <citation type="submission" date="1991-11" db="EMBL/GenBank/DDBJ databases">
        <authorList>
            <person name="Bryant D.W."/>
            <person name="Rossetto F.E."/>
            <person name="O'Reilly C."/>
            <person name="Nieboer E."/>
            <person name="Turnbull J."/>
        </authorList>
    </citation>
    <scope>NUCLEOTIDE SEQUENCE [GENOMIC DNA] OF 1-36</scope>
    <source>
        <strain>LT2</strain>
    </source>
</reference>
<reference key="3">
    <citation type="journal article" date="1994" name="Nat. Genet.">
        <title>Large scale bacterial gene discovery by similarity search.</title>
        <authorList>
            <person name="Robison K."/>
            <person name="Gilbert W."/>
            <person name="Church G.M."/>
        </authorList>
    </citation>
    <scope>IDENTIFICATION</scope>
</reference>
<comment type="function">
    <text evidence="1">Catalyzes the hydrolysis of esters.</text>
</comment>
<comment type="catalytic activity">
    <reaction evidence="1">
        <text>a carboxylic ester + H2O = an alcohol + a carboxylate + H(+)</text>
        <dbReference type="Rhea" id="RHEA:21164"/>
        <dbReference type="ChEBI" id="CHEBI:15377"/>
        <dbReference type="ChEBI" id="CHEBI:15378"/>
        <dbReference type="ChEBI" id="CHEBI:29067"/>
        <dbReference type="ChEBI" id="CHEBI:30879"/>
        <dbReference type="ChEBI" id="CHEBI:33308"/>
        <dbReference type="EC" id="3.1.1.1"/>
    </reaction>
</comment>
<comment type="similarity">
    <text evidence="1">Belongs to the FrsA family.</text>
</comment>
<organism>
    <name type="scientific">Salmonella typhimurium (strain LT2 / SGSC1412 / ATCC 700720)</name>
    <dbReference type="NCBI Taxonomy" id="99287"/>
    <lineage>
        <taxon>Bacteria</taxon>
        <taxon>Pseudomonadati</taxon>
        <taxon>Pseudomonadota</taxon>
        <taxon>Gammaproteobacteria</taxon>
        <taxon>Enterobacterales</taxon>
        <taxon>Enterobacteriaceae</taxon>
        <taxon>Salmonella</taxon>
    </lineage>
</organism>